<feature type="chain" id="PRO_0000213066" description="Phosphoglycerol transferase I">
    <location>
        <begin position="1"/>
        <end position="702"/>
    </location>
</feature>
<feature type="transmembrane region" description="Helical" evidence="1">
    <location>
        <begin position="3"/>
        <end position="25"/>
    </location>
</feature>
<feature type="transmembrane region" description="Helical" evidence="1">
    <location>
        <begin position="73"/>
        <end position="95"/>
    </location>
</feature>
<feature type="transmembrane region" description="Helical" evidence="1">
    <location>
        <begin position="102"/>
        <end position="124"/>
    </location>
</feature>
<proteinExistence type="inferred from homology"/>
<organism>
    <name type="scientific">Xanthomonas campestris pv. campestris (strain ATCC 33913 / DSM 3586 / NCPPB 528 / LMG 568 / P 25)</name>
    <dbReference type="NCBI Taxonomy" id="190485"/>
    <lineage>
        <taxon>Bacteria</taxon>
        <taxon>Pseudomonadati</taxon>
        <taxon>Pseudomonadota</taxon>
        <taxon>Gammaproteobacteria</taxon>
        <taxon>Lysobacterales</taxon>
        <taxon>Lysobacteraceae</taxon>
        <taxon>Xanthomonas</taxon>
    </lineage>
</organism>
<dbReference type="EC" id="2.7.8.20" evidence="1"/>
<dbReference type="EMBL" id="AE008922">
    <property type="protein sequence ID" value="AAM39721.1"/>
    <property type="status" value="ALT_INIT"/>
    <property type="molecule type" value="Genomic_DNA"/>
</dbReference>
<dbReference type="RefSeq" id="NP_635797.2">
    <property type="nucleotide sequence ID" value="NC_003902.1"/>
</dbReference>
<dbReference type="RefSeq" id="WP_011035656.1">
    <property type="nucleotide sequence ID" value="NC_003902.1"/>
</dbReference>
<dbReference type="SMR" id="Q8PDD7"/>
<dbReference type="STRING" id="190485.XCC0403"/>
<dbReference type="EnsemblBacteria" id="AAM39721">
    <property type="protein sequence ID" value="AAM39721"/>
    <property type="gene ID" value="XCC0403"/>
</dbReference>
<dbReference type="KEGG" id="xcc:XCC0403"/>
<dbReference type="PATRIC" id="fig|190485.4.peg.441"/>
<dbReference type="eggNOG" id="COG1368">
    <property type="taxonomic scope" value="Bacteria"/>
</dbReference>
<dbReference type="HOGENOM" id="CLU_390221_0_0_6"/>
<dbReference type="OrthoDB" id="9760224at2"/>
<dbReference type="UniPathway" id="UPA00637"/>
<dbReference type="Proteomes" id="UP000001010">
    <property type="component" value="Chromosome"/>
</dbReference>
<dbReference type="GO" id="GO:0016020">
    <property type="term" value="C:membrane"/>
    <property type="evidence" value="ECO:0000318"/>
    <property type="project" value="GO_Central"/>
</dbReference>
<dbReference type="GO" id="GO:0005886">
    <property type="term" value="C:plasma membrane"/>
    <property type="evidence" value="ECO:0007669"/>
    <property type="project" value="UniProtKB-SubCell"/>
</dbReference>
<dbReference type="GO" id="GO:0008960">
    <property type="term" value="F:phosphatidylglycerol-membrane-oligosaccharide glycerophosphotransferase activity"/>
    <property type="evidence" value="ECO:0007669"/>
    <property type="project" value="UniProtKB-UniRule"/>
</dbReference>
<dbReference type="GO" id="GO:0016740">
    <property type="term" value="F:transferase activity"/>
    <property type="evidence" value="ECO:0000318"/>
    <property type="project" value="GO_Central"/>
</dbReference>
<dbReference type="GO" id="GO:0009250">
    <property type="term" value="P:glucan biosynthetic process"/>
    <property type="evidence" value="ECO:0007669"/>
    <property type="project" value="UniProtKB-UniRule"/>
</dbReference>
<dbReference type="CDD" id="cd16015">
    <property type="entry name" value="LTA_synthase"/>
    <property type="match status" value="1"/>
</dbReference>
<dbReference type="Gene3D" id="3.40.720.10">
    <property type="entry name" value="Alkaline Phosphatase, subunit A"/>
    <property type="match status" value="1"/>
</dbReference>
<dbReference type="HAMAP" id="MF_01070">
    <property type="entry name" value="MdoB_OpgB"/>
    <property type="match status" value="1"/>
</dbReference>
<dbReference type="InterPro" id="IPR017850">
    <property type="entry name" value="Alkaline_phosphatase_core_sf"/>
</dbReference>
<dbReference type="InterPro" id="IPR020881">
    <property type="entry name" value="OpgB"/>
</dbReference>
<dbReference type="InterPro" id="IPR050448">
    <property type="entry name" value="OpgB/LTA_synthase_biosynth"/>
</dbReference>
<dbReference type="InterPro" id="IPR000917">
    <property type="entry name" value="Sulfatase_N"/>
</dbReference>
<dbReference type="NCBIfam" id="NF009027">
    <property type="entry name" value="PRK12363.1"/>
    <property type="match status" value="1"/>
</dbReference>
<dbReference type="PANTHER" id="PTHR47371">
    <property type="entry name" value="LIPOTEICHOIC ACID SYNTHASE"/>
    <property type="match status" value="1"/>
</dbReference>
<dbReference type="PANTHER" id="PTHR47371:SF3">
    <property type="entry name" value="PHOSPHOGLYCEROL TRANSFERASE I"/>
    <property type="match status" value="1"/>
</dbReference>
<dbReference type="Pfam" id="PF00884">
    <property type="entry name" value="Sulfatase"/>
    <property type="match status" value="1"/>
</dbReference>
<dbReference type="SUPFAM" id="SSF53649">
    <property type="entry name" value="Alkaline phosphatase-like"/>
    <property type="match status" value="1"/>
</dbReference>
<sequence>MHWILALSLLLLLLLLVASPRLAWLKAGLLSLLLLLLSAWGLVDRLSGDGVNAATLYHLRADMDGAGVSDFSGYIAVFIGMVLLSLSPLVLLRVRRFRRPRGGGAVFGAFVVMLLVSVAVSPLYRDGKRLYYQLRPVDYATVVPEYQVPQQPLQKRKNIVWIYGESLERTYFDEATFPGLMPNLHQLATEAVDVRNLTSTEGSGWTIAGMVASMCGVPLTTAPGDENSMGRMGLFLPEARCLGDYLKDQGYRNHYVGGADASFAGKGSFLASHGFDVVHDVNYFHDKGVAPKHFSAWGVHDDVLLDDAWDSFQTLSRAGQPFMLTTLTMDTHHPAGHLPLACKNQRYESPLGDIGLLHAIKCSDRLIGRLVTRIRNSRYGRNTIIVIASDHLAMPNDLSDVLAKQKRENLLLFLGKDIPPQQVVTRAGSTLDSGATLLQLLEPGMRTLGFGRSLLANDAPPSASVAASRDSGKNYPRYLAYARTLWTGRSTRMLRVNGNGDVVVGVQQVRPPVLLEYDDNTNLKTVYLENTSRQFDRTHSDGTLAYVDRCTAFEDGSADGDWCALVVDRNQHMKLYRDPDLTRGIAVDAPLDVTPQAPRPRVRQPIMLTQAARKTEAGRYMLELYAKRRPTRAFWVEAVSSERKVVLAQQWVVPDASGRIRMPVGLEHAVEDLEIRAWLDYTEEVSVDDLALVKDTAVADRS</sequence>
<reference key="1">
    <citation type="journal article" date="2002" name="Nature">
        <title>Comparison of the genomes of two Xanthomonas pathogens with differing host specificities.</title>
        <authorList>
            <person name="da Silva A.C.R."/>
            <person name="Ferro J.A."/>
            <person name="Reinach F.C."/>
            <person name="Farah C.S."/>
            <person name="Furlan L.R."/>
            <person name="Quaggio R.B."/>
            <person name="Monteiro-Vitorello C.B."/>
            <person name="Van Sluys M.A."/>
            <person name="Almeida N.F. Jr."/>
            <person name="Alves L.M.C."/>
            <person name="do Amaral A.M."/>
            <person name="Bertolini M.C."/>
            <person name="Camargo L.E.A."/>
            <person name="Camarotte G."/>
            <person name="Cannavan F."/>
            <person name="Cardozo J."/>
            <person name="Chambergo F."/>
            <person name="Ciapina L.P."/>
            <person name="Cicarelli R.M.B."/>
            <person name="Coutinho L.L."/>
            <person name="Cursino-Santos J.R."/>
            <person name="El-Dorry H."/>
            <person name="Faria J.B."/>
            <person name="Ferreira A.J.S."/>
            <person name="Ferreira R.C.C."/>
            <person name="Ferro M.I.T."/>
            <person name="Formighieri E.F."/>
            <person name="Franco M.C."/>
            <person name="Greggio C.C."/>
            <person name="Gruber A."/>
            <person name="Katsuyama A.M."/>
            <person name="Kishi L.T."/>
            <person name="Leite R.P."/>
            <person name="Lemos E.G.M."/>
            <person name="Lemos M.V.F."/>
            <person name="Locali E.C."/>
            <person name="Machado M.A."/>
            <person name="Madeira A.M.B.N."/>
            <person name="Martinez-Rossi N.M."/>
            <person name="Martins E.C."/>
            <person name="Meidanis J."/>
            <person name="Menck C.F.M."/>
            <person name="Miyaki C.Y."/>
            <person name="Moon D.H."/>
            <person name="Moreira L.M."/>
            <person name="Novo M.T.M."/>
            <person name="Okura V.K."/>
            <person name="Oliveira M.C."/>
            <person name="Oliveira V.R."/>
            <person name="Pereira H.A."/>
            <person name="Rossi A."/>
            <person name="Sena J.A.D."/>
            <person name="Silva C."/>
            <person name="de Souza R.F."/>
            <person name="Spinola L.A.F."/>
            <person name="Takita M.A."/>
            <person name="Tamura R.E."/>
            <person name="Teixeira E.C."/>
            <person name="Tezza R.I.D."/>
            <person name="Trindade dos Santos M."/>
            <person name="Truffi D."/>
            <person name="Tsai S.M."/>
            <person name="White F.F."/>
            <person name="Setubal J.C."/>
            <person name="Kitajima J.P."/>
        </authorList>
    </citation>
    <scope>NUCLEOTIDE SEQUENCE [LARGE SCALE GENOMIC DNA]</scope>
    <source>
        <strain>ATCC 33913 / DSM 3586 / NCPPB 528 / LMG 568 / P 25</strain>
    </source>
</reference>
<name>OPGB_XANCP</name>
<accession>Q8PDD7</accession>
<keyword id="KW-0997">Cell inner membrane</keyword>
<keyword id="KW-1003">Cell membrane</keyword>
<keyword id="KW-0472">Membrane</keyword>
<keyword id="KW-1185">Reference proteome</keyword>
<keyword id="KW-0808">Transferase</keyword>
<keyword id="KW-0812">Transmembrane</keyword>
<keyword id="KW-1133">Transmembrane helix</keyword>
<comment type="function">
    <text evidence="1">Transfers a phosphoglycerol residue from phosphatidylglycerol to the membrane-bound nascent glucan backbones.</text>
</comment>
<comment type="catalytic activity">
    <reaction evidence="1">
        <text>a phosphatidylglycerol + a membrane-derived-oligosaccharide D-glucose = a 1,2-diacyl-sn-glycerol + a membrane-derived-oligosaccharide 6-(glycerophospho)-D-glucose.</text>
        <dbReference type="EC" id="2.7.8.20"/>
    </reaction>
</comment>
<comment type="pathway">
    <text evidence="1">Glycan metabolism; osmoregulated periplasmic glucan (OPG) biosynthesis.</text>
</comment>
<comment type="subcellular location">
    <subcellularLocation>
        <location evidence="1">Cell inner membrane</location>
        <topology evidence="1">Multi-pass membrane protein</topology>
    </subcellularLocation>
</comment>
<comment type="similarity">
    <text evidence="1">Belongs to the OpgB family.</text>
</comment>
<comment type="sequence caution" evidence="2">
    <conflict type="erroneous initiation">
        <sequence resource="EMBL-CDS" id="AAM39721"/>
    </conflict>
</comment>
<evidence type="ECO:0000255" key="1">
    <source>
        <dbReference type="HAMAP-Rule" id="MF_01070"/>
    </source>
</evidence>
<evidence type="ECO:0000305" key="2"/>
<protein>
    <recommendedName>
        <fullName evidence="1">Phosphoglycerol transferase I</fullName>
        <ecNumber evidence="1">2.7.8.20</ecNumber>
    </recommendedName>
    <alternativeName>
        <fullName evidence="1">Phosphatidylglycerol--membrane-oligosaccharide glycerophosphotransferase</fullName>
    </alternativeName>
</protein>
<gene>
    <name evidence="1" type="primary">opgB</name>
    <name type="synonym">mdoB</name>
    <name type="ordered locus">XCC0403</name>
</gene>